<name>MSRB_YERPP</name>
<keyword id="KW-0479">Metal-binding</keyword>
<keyword id="KW-0560">Oxidoreductase</keyword>
<keyword id="KW-0862">Zinc</keyword>
<protein>
    <recommendedName>
        <fullName evidence="1">Peptide methionine sulfoxide reductase MsrB</fullName>
        <ecNumber evidence="1">1.8.4.12</ecNumber>
    </recommendedName>
    <alternativeName>
        <fullName evidence="1">Peptide-methionine (R)-S-oxide reductase</fullName>
    </alternativeName>
</protein>
<comment type="catalytic activity">
    <reaction evidence="1">
        <text>L-methionyl-[protein] + [thioredoxin]-disulfide + H2O = L-methionyl-(R)-S-oxide-[protein] + [thioredoxin]-dithiol</text>
        <dbReference type="Rhea" id="RHEA:24164"/>
        <dbReference type="Rhea" id="RHEA-COMP:10698"/>
        <dbReference type="Rhea" id="RHEA-COMP:10700"/>
        <dbReference type="Rhea" id="RHEA-COMP:12313"/>
        <dbReference type="Rhea" id="RHEA-COMP:12314"/>
        <dbReference type="ChEBI" id="CHEBI:15377"/>
        <dbReference type="ChEBI" id="CHEBI:16044"/>
        <dbReference type="ChEBI" id="CHEBI:29950"/>
        <dbReference type="ChEBI" id="CHEBI:45764"/>
        <dbReference type="ChEBI" id="CHEBI:50058"/>
        <dbReference type="EC" id="1.8.4.12"/>
    </reaction>
</comment>
<comment type="cofactor">
    <cofactor evidence="1">
        <name>Zn(2+)</name>
        <dbReference type="ChEBI" id="CHEBI:29105"/>
    </cofactor>
    <text evidence="1">Binds 1 zinc ion per subunit. The zinc ion is important for the structural integrity of the protein.</text>
</comment>
<comment type="similarity">
    <text evidence="1">Belongs to the MsrB Met sulfoxide reductase family.</text>
</comment>
<reference key="1">
    <citation type="submission" date="2007-02" db="EMBL/GenBank/DDBJ databases">
        <title>Complete sequence of chromosome of Yersinia pestis Pestoides F.</title>
        <authorList>
            <consortium name="US DOE Joint Genome Institute"/>
            <person name="Copeland A."/>
            <person name="Lucas S."/>
            <person name="Lapidus A."/>
            <person name="Barry K."/>
            <person name="Detter J.C."/>
            <person name="Glavina del Rio T."/>
            <person name="Hammon N."/>
            <person name="Israni S."/>
            <person name="Dalin E."/>
            <person name="Tice H."/>
            <person name="Pitluck S."/>
            <person name="Di Bartolo G."/>
            <person name="Chain P."/>
            <person name="Malfatti S."/>
            <person name="Shin M."/>
            <person name="Vergez L."/>
            <person name="Schmutz J."/>
            <person name="Larimer F."/>
            <person name="Land M."/>
            <person name="Hauser L."/>
            <person name="Worsham P."/>
            <person name="Chu M."/>
            <person name="Bearden S."/>
            <person name="Garcia E."/>
            <person name="Richardson P."/>
        </authorList>
    </citation>
    <scope>NUCLEOTIDE SEQUENCE [LARGE SCALE GENOMIC DNA]</scope>
    <source>
        <strain>Pestoides F</strain>
    </source>
</reference>
<accession>A4TJB4</accession>
<gene>
    <name evidence="1" type="primary">msrB</name>
    <name type="ordered locus">YPDSF_0976</name>
</gene>
<evidence type="ECO:0000255" key="1">
    <source>
        <dbReference type="HAMAP-Rule" id="MF_01400"/>
    </source>
</evidence>
<evidence type="ECO:0000255" key="2">
    <source>
        <dbReference type="PROSITE-ProRule" id="PRU01126"/>
    </source>
</evidence>
<feature type="chain" id="PRO_1000068304" description="Peptide methionine sulfoxide reductase MsrB">
    <location>
        <begin position="1"/>
        <end position="137"/>
    </location>
</feature>
<feature type="domain" description="MsrB" evidence="2">
    <location>
        <begin position="7"/>
        <end position="129"/>
    </location>
</feature>
<feature type="active site" description="Nucleophile" evidence="2">
    <location>
        <position position="118"/>
    </location>
</feature>
<feature type="binding site" evidence="2">
    <location>
        <position position="46"/>
    </location>
    <ligand>
        <name>Zn(2+)</name>
        <dbReference type="ChEBI" id="CHEBI:29105"/>
    </ligand>
</feature>
<feature type="binding site" evidence="2">
    <location>
        <position position="49"/>
    </location>
    <ligand>
        <name>Zn(2+)</name>
        <dbReference type="ChEBI" id="CHEBI:29105"/>
    </ligand>
</feature>
<feature type="binding site" evidence="2">
    <location>
        <position position="95"/>
    </location>
    <ligand>
        <name>Zn(2+)</name>
        <dbReference type="ChEBI" id="CHEBI:29105"/>
    </ligand>
</feature>
<feature type="binding site" evidence="2">
    <location>
        <position position="98"/>
    </location>
    <ligand>
        <name>Zn(2+)</name>
        <dbReference type="ChEBI" id="CHEBI:29105"/>
    </ligand>
</feature>
<dbReference type="EC" id="1.8.4.12" evidence="1"/>
<dbReference type="EMBL" id="CP000668">
    <property type="protein sequence ID" value="ABP39376.1"/>
    <property type="molecule type" value="Genomic_DNA"/>
</dbReference>
<dbReference type="RefSeq" id="WP_002211677.1">
    <property type="nucleotide sequence ID" value="NZ_CP009715.1"/>
</dbReference>
<dbReference type="SMR" id="A4TJB4"/>
<dbReference type="GeneID" id="57976510"/>
<dbReference type="KEGG" id="ypp:YPDSF_0976"/>
<dbReference type="PATRIC" id="fig|386656.14.peg.2870"/>
<dbReference type="GO" id="GO:0005737">
    <property type="term" value="C:cytoplasm"/>
    <property type="evidence" value="ECO:0007669"/>
    <property type="project" value="TreeGrafter"/>
</dbReference>
<dbReference type="GO" id="GO:0033743">
    <property type="term" value="F:peptide-methionine (R)-S-oxide reductase activity"/>
    <property type="evidence" value="ECO:0007669"/>
    <property type="project" value="UniProtKB-UniRule"/>
</dbReference>
<dbReference type="GO" id="GO:0008270">
    <property type="term" value="F:zinc ion binding"/>
    <property type="evidence" value="ECO:0007669"/>
    <property type="project" value="UniProtKB-UniRule"/>
</dbReference>
<dbReference type="GO" id="GO:0030091">
    <property type="term" value="P:protein repair"/>
    <property type="evidence" value="ECO:0007669"/>
    <property type="project" value="InterPro"/>
</dbReference>
<dbReference type="GO" id="GO:0006979">
    <property type="term" value="P:response to oxidative stress"/>
    <property type="evidence" value="ECO:0007669"/>
    <property type="project" value="InterPro"/>
</dbReference>
<dbReference type="FunFam" id="2.170.150.20:FF:000001">
    <property type="entry name" value="Peptide methionine sulfoxide reductase MsrB"/>
    <property type="match status" value="1"/>
</dbReference>
<dbReference type="Gene3D" id="2.170.150.20">
    <property type="entry name" value="Peptide methionine sulfoxide reductase"/>
    <property type="match status" value="1"/>
</dbReference>
<dbReference type="HAMAP" id="MF_01400">
    <property type="entry name" value="MsrB"/>
    <property type="match status" value="1"/>
</dbReference>
<dbReference type="InterPro" id="IPR028427">
    <property type="entry name" value="Met_Sox_Rdtase_MsrB"/>
</dbReference>
<dbReference type="InterPro" id="IPR002579">
    <property type="entry name" value="Met_Sox_Rdtase_MsrB_dom"/>
</dbReference>
<dbReference type="InterPro" id="IPR011057">
    <property type="entry name" value="Mss4-like_sf"/>
</dbReference>
<dbReference type="NCBIfam" id="TIGR00357">
    <property type="entry name" value="peptide-methionine (R)-S-oxide reductase MsrB"/>
    <property type="match status" value="1"/>
</dbReference>
<dbReference type="PANTHER" id="PTHR10173">
    <property type="entry name" value="METHIONINE SULFOXIDE REDUCTASE"/>
    <property type="match status" value="1"/>
</dbReference>
<dbReference type="PANTHER" id="PTHR10173:SF52">
    <property type="entry name" value="METHIONINE-R-SULFOXIDE REDUCTASE B1"/>
    <property type="match status" value="1"/>
</dbReference>
<dbReference type="Pfam" id="PF01641">
    <property type="entry name" value="SelR"/>
    <property type="match status" value="1"/>
</dbReference>
<dbReference type="SUPFAM" id="SSF51316">
    <property type="entry name" value="Mss4-like"/>
    <property type="match status" value="1"/>
</dbReference>
<dbReference type="PROSITE" id="PS51790">
    <property type="entry name" value="MSRB"/>
    <property type="match status" value="1"/>
</dbReference>
<proteinExistence type="inferred from homology"/>
<organism>
    <name type="scientific">Yersinia pestis (strain Pestoides F)</name>
    <dbReference type="NCBI Taxonomy" id="386656"/>
    <lineage>
        <taxon>Bacteria</taxon>
        <taxon>Pseudomonadati</taxon>
        <taxon>Pseudomonadota</taxon>
        <taxon>Gammaproteobacteria</taxon>
        <taxon>Enterobacterales</taxon>
        <taxon>Yersiniaceae</taxon>
        <taxon>Yersinia</taxon>
    </lineage>
</organism>
<sequence length="137" mass="15515">MAKELNPTENIEKLSDIQRYVTQERGTEAPFTGKLLHNKRDGVYQCLCCHQPLFISESKFDSGCGWPSFYQPIDADSIRYIDDYSHNMHRIEIRCGNCDAHLGHVFPDGPQPTGERYCINSASLNFVDDQNGEQTAG</sequence>